<protein>
    <recommendedName>
        <fullName evidence="1">Glutathione transport system permease protein GsiD</fullName>
    </recommendedName>
</protein>
<reference key="1">
    <citation type="journal article" date="2001" name="Nature">
        <title>Genome sequence of enterohaemorrhagic Escherichia coli O157:H7.</title>
        <authorList>
            <person name="Perna N.T."/>
            <person name="Plunkett G. III"/>
            <person name="Burland V."/>
            <person name="Mau B."/>
            <person name="Glasner J.D."/>
            <person name="Rose D.J."/>
            <person name="Mayhew G.F."/>
            <person name="Evans P.S."/>
            <person name="Gregor J."/>
            <person name="Kirkpatrick H.A."/>
            <person name="Posfai G."/>
            <person name="Hackett J."/>
            <person name="Klink S."/>
            <person name="Boutin A."/>
            <person name="Shao Y."/>
            <person name="Miller L."/>
            <person name="Grotbeck E.J."/>
            <person name="Davis N.W."/>
            <person name="Lim A."/>
            <person name="Dimalanta E.T."/>
            <person name="Potamousis K."/>
            <person name="Apodaca J."/>
            <person name="Anantharaman T.S."/>
            <person name="Lin J."/>
            <person name="Yen G."/>
            <person name="Schwartz D.C."/>
            <person name="Welch R.A."/>
            <person name="Blattner F.R."/>
        </authorList>
    </citation>
    <scope>NUCLEOTIDE SEQUENCE [LARGE SCALE GENOMIC DNA]</scope>
    <source>
        <strain>O157:H7 / EDL933 / ATCC 700927 / EHEC</strain>
    </source>
</reference>
<reference key="2">
    <citation type="journal article" date="2001" name="DNA Res.">
        <title>Complete genome sequence of enterohemorrhagic Escherichia coli O157:H7 and genomic comparison with a laboratory strain K-12.</title>
        <authorList>
            <person name="Hayashi T."/>
            <person name="Makino K."/>
            <person name="Ohnishi M."/>
            <person name="Kurokawa K."/>
            <person name="Ishii K."/>
            <person name="Yokoyama K."/>
            <person name="Han C.-G."/>
            <person name="Ohtsubo E."/>
            <person name="Nakayama K."/>
            <person name="Murata T."/>
            <person name="Tanaka M."/>
            <person name="Tobe T."/>
            <person name="Iida T."/>
            <person name="Takami H."/>
            <person name="Honda T."/>
            <person name="Sasakawa C."/>
            <person name="Ogasawara N."/>
            <person name="Yasunaga T."/>
            <person name="Kuhara S."/>
            <person name="Shiba T."/>
            <person name="Hattori M."/>
            <person name="Shinagawa H."/>
        </authorList>
    </citation>
    <scope>NUCLEOTIDE SEQUENCE [LARGE SCALE GENOMIC DNA]</scope>
    <source>
        <strain>O157:H7 / Sakai / RIMD 0509952 / EHEC</strain>
    </source>
</reference>
<feature type="chain" id="PRO_0000280002" description="Glutathione transport system permease protein GsiD">
    <location>
        <begin position="1"/>
        <end position="303"/>
    </location>
</feature>
<feature type="transmembrane region" description="Helical" evidence="3">
    <location>
        <begin position="40"/>
        <end position="60"/>
    </location>
</feature>
<feature type="transmembrane region" description="Helical" evidence="3">
    <location>
        <begin position="105"/>
        <end position="125"/>
    </location>
</feature>
<feature type="transmembrane region" description="Helical" evidence="3">
    <location>
        <begin position="144"/>
        <end position="164"/>
    </location>
</feature>
<feature type="transmembrane region" description="Helical" evidence="3">
    <location>
        <begin position="165"/>
        <end position="185"/>
    </location>
</feature>
<feature type="transmembrane region" description="Helical" evidence="3">
    <location>
        <begin position="222"/>
        <end position="242"/>
    </location>
</feature>
<feature type="transmembrane region" description="Helical" evidence="3">
    <location>
        <begin position="266"/>
        <end position="286"/>
    </location>
</feature>
<feature type="domain" description="ABC transmembrane type-1" evidence="3">
    <location>
        <begin position="101"/>
        <end position="290"/>
    </location>
</feature>
<dbReference type="EMBL" id="AE005174">
    <property type="protein sequence ID" value="AAG55206.1"/>
    <property type="molecule type" value="Genomic_DNA"/>
</dbReference>
<dbReference type="EMBL" id="BA000007">
    <property type="protein sequence ID" value="BAB34334.1"/>
    <property type="molecule type" value="Genomic_DNA"/>
</dbReference>
<dbReference type="PIR" id="B85593">
    <property type="entry name" value="B85593"/>
</dbReference>
<dbReference type="PIR" id="G90742">
    <property type="entry name" value="G90742"/>
</dbReference>
<dbReference type="RefSeq" id="NP_308938.1">
    <property type="nucleotide sequence ID" value="NC_002695.1"/>
</dbReference>
<dbReference type="RefSeq" id="WP_001236044.1">
    <property type="nucleotide sequence ID" value="NZ_VOAI01000006.1"/>
</dbReference>
<dbReference type="SMR" id="Q8X6V6"/>
<dbReference type="STRING" id="155864.Z1056"/>
<dbReference type="GeneID" id="917649"/>
<dbReference type="GeneID" id="93776592"/>
<dbReference type="KEGG" id="ece:Z1056"/>
<dbReference type="KEGG" id="ecs:ECs_0911"/>
<dbReference type="PATRIC" id="fig|386585.9.peg.1026"/>
<dbReference type="eggNOG" id="COG1173">
    <property type="taxonomic scope" value="Bacteria"/>
</dbReference>
<dbReference type="HOGENOM" id="CLU_028518_1_1_6"/>
<dbReference type="OMA" id="IAWTRFK"/>
<dbReference type="Proteomes" id="UP000000558">
    <property type="component" value="Chromosome"/>
</dbReference>
<dbReference type="Proteomes" id="UP000002519">
    <property type="component" value="Chromosome"/>
</dbReference>
<dbReference type="GO" id="GO:0005886">
    <property type="term" value="C:plasma membrane"/>
    <property type="evidence" value="ECO:0007669"/>
    <property type="project" value="UniProtKB-SubCell"/>
</dbReference>
<dbReference type="GO" id="GO:0071916">
    <property type="term" value="F:dipeptide transmembrane transporter activity"/>
    <property type="evidence" value="ECO:0007669"/>
    <property type="project" value="TreeGrafter"/>
</dbReference>
<dbReference type="CDD" id="cd06261">
    <property type="entry name" value="TM_PBP2"/>
    <property type="match status" value="1"/>
</dbReference>
<dbReference type="FunFam" id="1.10.3720.10:FF:000022">
    <property type="entry name" value="Glutathione ABC transporter permease GsiD"/>
    <property type="match status" value="1"/>
</dbReference>
<dbReference type="Gene3D" id="1.10.3720.10">
    <property type="entry name" value="MetI-like"/>
    <property type="match status" value="1"/>
</dbReference>
<dbReference type="InterPro" id="IPR050366">
    <property type="entry name" value="BP-dependent_transpt_permease"/>
</dbReference>
<dbReference type="InterPro" id="IPR000515">
    <property type="entry name" value="MetI-like"/>
</dbReference>
<dbReference type="InterPro" id="IPR035906">
    <property type="entry name" value="MetI-like_sf"/>
</dbReference>
<dbReference type="InterPro" id="IPR025966">
    <property type="entry name" value="OppC_N"/>
</dbReference>
<dbReference type="NCBIfam" id="NF011662">
    <property type="entry name" value="PRK15082.1"/>
    <property type="match status" value="1"/>
</dbReference>
<dbReference type="PANTHER" id="PTHR43386:SF3">
    <property type="entry name" value="GLUTATHIONE TRANSPORT SYSTEM PERMEASE PROTEIN GSID"/>
    <property type="match status" value="1"/>
</dbReference>
<dbReference type="PANTHER" id="PTHR43386">
    <property type="entry name" value="OLIGOPEPTIDE TRANSPORT SYSTEM PERMEASE PROTEIN APPC"/>
    <property type="match status" value="1"/>
</dbReference>
<dbReference type="Pfam" id="PF00528">
    <property type="entry name" value="BPD_transp_1"/>
    <property type="match status" value="1"/>
</dbReference>
<dbReference type="Pfam" id="PF12911">
    <property type="entry name" value="OppC_N"/>
    <property type="match status" value="1"/>
</dbReference>
<dbReference type="SUPFAM" id="SSF161098">
    <property type="entry name" value="MetI-like"/>
    <property type="match status" value="1"/>
</dbReference>
<dbReference type="PROSITE" id="PS50928">
    <property type="entry name" value="ABC_TM1"/>
    <property type="match status" value="1"/>
</dbReference>
<comment type="function">
    <text evidence="1">Part of the ABC transporter complex GsiABCD involved in glutathione import. Probably responsible for the translocation of the substrate across the membrane.</text>
</comment>
<comment type="subunit">
    <text evidence="1">The complex is composed of two ATP-binding proteins (GsiA), two transmembrane proteins (GsiC and GsiD) and a solute-binding protein (GsiB).</text>
</comment>
<comment type="subcellular location">
    <subcellularLocation>
        <location evidence="1">Cell inner membrane</location>
        <topology evidence="2">Multi-pass membrane protein</topology>
    </subcellularLocation>
</comment>
<comment type="similarity">
    <text evidence="4">Belongs to the binding-protein-dependent transport system permease family.</text>
</comment>
<evidence type="ECO:0000250" key="1">
    <source>
        <dbReference type="UniProtKB" id="P75799"/>
    </source>
</evidence>
<evidence type="ECO:0000255" key="2"/>
<evidence type="ECO:0000255" key="3">
    <source>
        <dbReference type="PROSITE-ProRule" id="PRU00441"/>
    </source>
</evidence>
<evidence type="ECO:0000305" key="4"/>
<keyword id="KW-0997">Cell inner membrane</keyword>
<keyword id="KW-1003">Cell membrane</keyword>
<keyword id="KW-0472">Membrane</keyword>
<keyword id="KW-1185">Reference proteome</keyword>
<keyword id="KW-0812">Transmembrane</keyword>
<keyword id="KW-1133">Transmembrane helix</keyword>
<keyword id="KW-0813">Transport</keyword>
<gene>
    <name evidence="1" type="primary">gsiD</name>
    <name type="ordered locus">Z1056</name>
    <name type="ordered locus">ECs0911</name>
</gene>
<sequence length="303" mass="33252">MRLFNWRRQAVLNAMPLVKPDQVRTPWHEFWRRFRRQHMAMTAALFVILLIVVAIFARWIAPYDAENYFDYDNLNNGPSLQHWFGVDSLGRDIFSRVLVGAQISLAAGVFAVFIGAAIGTLLGLLAGYYEGWWDRLIMRICDVLFAFPGILLAIAVVAVLGSGIANVIIAVAIFSIPAFARLVRGNTLVLKQQTFIESARSIGASDMTILLRHILPGTVSSIVVFFTMRIGTSIISAASLSFLGLGAQPPTPEWGAMLNEARADMVIAPHVAVFPALAIFLTVLAFNLLGDGLRDALDPKIKG</sequence>
<name>GSID_ECO57</name>
<proteinExistence type="inferred from homology"/>
<organism>
    <name type="scientific">Escherichia coli O157:H7</name>
    <dbReference type="NCBI Taxonomy" id="83334"/>
    <lineage>
        <taxon>Bacteria</taxon>
        <taxon>Pseudomonadati</taxon>
        <taxon>Pseudomonadota</taxon>
        <taxon>Gammaproteobacteria</taxon>
        <taxon>Enterobacterales</taxon>
        <taxon>Enterobacteriaceae</taxon>
        <taxon>Escherichia</taxon>
    </lineage>
</organism>
<accession>Q8X6V6</accession>
<accession>Q7AGA3</accession>